<accession>B7V9J9</accession>
<feature type="chain" id="PRO_1000123471" description="Phosphoserine aminotransferase">
    <location>
        <begin position="1"/>
        <end position="361"/>
    </location>
</feature>
<feature type="binding site" evidence="1">
    <location>
        <position position="43"/>
    </location>
    <ligand>
        <name>L-glutamate</name>
        <dbReference type="ChEBI" id="CHEBI:29985"/>
    </ligand>
</feature>
<feature type="binding site" evidence="1">
    <location>
        <begin position="77"/>
        <end position="78"/>
    </location>
    <ligand>
        <name>pyridoxal 5'-phosphate</name>
        <dbReference type="ChEBI" id="CHEBI:597326"/>
    </ligand>
</feature>
<feature type="binding site" evidence="1">
    <location>
        <position position="103"/>
    </location>
    <ligand>
        <name>pyridoxal 5'-phosphate</name>
        <dbReference type="ChEBI" id="CHEBI:597326"/>
    </ligand>
</feature>
<feature type="binding site" evidence="1">
    <location>
        <position position="153"/>
    </location>
    <ligand>
        <name>pyridoxal 5'-phosphate</name>
        <dbReference type="ChEBI" id="CHEBI:597326"/>
    </ligand>
</feature>
<feature type="binding site" evidence="1">
    <location>
        <position position="173"/>
    </location>
    <ligand>
        <name>pyridoxal 5'-phosphate</name>
        <dbReference type="ChEBI" id="CHEBI:597326"/>
    </ligand>
</feature>
<feature type="binding site" evidence="1">
    <location>
        <position position="196"/>
    </location>
    <ligand>
        <name>pyridoxal 5'-phosphate</name>
        <dbReference type="ChEBI" id="CHEBI:597326"/>
    </ligand>
</feature>
<feature type="binding site" evidence="1">
    <location>
        <begin position="238"/>
        <end position="239"/>
    </location>
    <ligand>
        <name>pyridoxal 5'-phosphate</name>
        <dbReference type="ChEBI" id="CHEBI:597326"/>
    </ligand>
</feature>
<feature type="modified residue" description="N6-(pyridoxal phosphate)lysine" evidence="1">
    <location>
        <position position="197"/>
    </location>
</feature>
<keyword id="KW-0028">Amino-acid biosynthesis</keyword>
<keyword id="KW-0032">Aminotransferase</keyword>
<keyword id="KW-0963">Cytoplasm</keyword>
<keyword id="KW-0663">Pyridoxal phosphate</keyword>
<keyword id="KW-0664">Pyridoxine biosynthesis</keyword>
<keyword id="KW-0718">Serine biosynthesis</keyword>
<keyword id="KW-0808">Transferase</keyword>
<proteinExistence type="inferred from homology"/>
<protein>
    <recommendedName>
        <fullName evidence="1">Phosphoserine aminotransferase</fullName>
        <ecNumber evidence="1">2.6.1.52</ecNumber>
    </recommendedName>
    <alternativeName>
        <fullName evidence="1">Phosphohydroxythreonine aminotransferase</fullName>
        <shortName evidence="1">PSAT</shortName>
    </alternativeName>
</protein>
<gene>
    <name evidence="1" type="primary">serC</name>
    <name type="ordered locus">PLES_19011</name>
</gene>
<reference key="1">
    <citation type="journal article" date="2009" name="Genome Res.">
        <title>Newly introduced genomic prophage islands are critical determinants of in vivo competitiveness in the Liverpool epidemic strain of Pseudomonas aeruginosa.</title>
        <authorList>
            <person name="Winstanley C."/>
            <person name="Langille M.G.I."/>
            <person name="Fothergill J.L."/>
            <person name="Kukavica-Ibrulj I."/>
            <person name="Paradis-Bleau C."/>
            <person name="Sanschagrin F."/>
            <person name="Thomson N.R."/>
            <person name="Winsor G.L."/>
            <person name="Quail M.A."/>
            <person name="Lennard N."/>
            <person name="Bignell A."/>
            <person name="Clarke L."/>
            <person name="Seeger K."/>
            <person name="Saunders D."/>
            <person name="Harris D."/>
            <person name="Parkhill J."/>
            <person name="Hancock R.E.W."/>
            <person name="Brinkman F.S.L."/>
            <person name="Levesque R.C."/>
        </authorList>
    </citation>
    <scope>NUCLEOTIDE SEQUENCE [LARGE SCALE GENOMIC DNA]</scope>
    <source>
        <strain>LESB58</strain>
    </source>
</reference>
<dbReference type="EC" id="2.6.1.52" evidence="1"/>
<dbReference type="EMBL" id="FM209186">
    <property type="protein sequence ID" value="CAW26629.1"/>
    <property type="molecule type" value="Genomic_DNA"/>
</dbReference>
<dbReference type="RefSeq" id="WP_003111764.1">
    <property type="nucleotide sequence ID" value="NC_011770.1"/>
</dbReference>
<dbReference type="SMR" id="B7V9J9"/>
<dbReference type="KEGG" id="pag:PLES_19011"/>
<dbReference type="HOGENOM" id="CLU_034866_0_2_6"/>
<dbReference type="UniPathway" id="UPA00135">
    <property type="reaction ID" value="UER00197"/>
</dbReference>
<dbReference type="UniPathway" id="UPA00244">
    <property type="reaction ID" value="UER00311"/>
</dbReference>
<dbReference type="GO" id="GO:0005737">
    <property type="term" value="C:cytoplasm"/>
    <property type="evidence" value="ECO:0007669"/>
    <property type="project" value="UniProtKB-SubCell"/>
</dbReference>
<dbReference type="GO" id="GO:0004648">
    <property type="term" value="F:O-phospho-L-serine:2-oxoglutarate aminotransferase activity"/>
    <property type="evidence" value="ECO:0007669"/>
    <property type="project" value="UniProtKB-UniRule"/>
</dbReference>
<dbReference type="GO" id="GO:0030170">
    <property type="term" value="F:pyridoxal phosphate binding"/>
    <property type="evidence" value="ECO:0007669"/>
    <property type="project" value="UniProtKB-UniRule"/>
</dbReference>
<dbReference type="GO" id="GO:0006564">
    <property type="term" value="P:L-serine biosynthetic process"/>
    <property type="evidence" value="ECO:0007669"/>
    <property type="project" value="UniProtKB-UniRule"/>
</dbReference>
<dbReference type="GO" id="GO:0008615">
    <property type="term" value="P:pyridoxine biosynthetic process"/>
    <property type="evidence" value="ECO:0007669"/>
    <property type="project" value="UniProtKB-UniRule"/>
</dbReference>
<dbReference type="CDD" id="cd00611">
    <property type="entry name" value="PSAT_like"/>
    <property type="match status" value="1"/>
</dbReference>
<dbReference type="FunFam" id="3.40.640.10:FF:000010">
    <property type="entry name" value="Phosphoserine aminotransferase"/>
    <property type="match status" value="1"/>
</dbReference>
<dbReference type="FunFam" id="3.90.1150.10:FF:000006">
    <property type="entry name" value="Phosphoserine aminotransferase"/>
    <property type="match status" value="1"/>
</dbReference>
<dbReference type="Gene3D" id="3.90.1150.10">
    <property type="entry name" value="Aspartate Aminotransferase, domain 1"/>
    <property type="match status" value="1"/>
</dbReference>
<dbReference type="Gene3D" id="3.40.640.10">
    <property type="entry name" value="Type I PLP-dependent aspartate aminotransferase-like (Major domain)"/>
    <property type="match status" value="1"/>
</dbReference>
<dbReference type="HAMAP" id="MF_00160">
    <property type="entry name" value="SerC_aminotrans_5"/>
    <property type="match status" value="1"/>
</dbReference>
<dbReference type="InterPro" id="IPR000192">
    <property type="entry name" value="Aminotrans_V_dom"/>
</dbReference>
<dbReference type="InterPro" id="IPR022278">
    <property type="entry name" value="Pser_aminoTfrase"/>
</dbReference>
<dbReference type="InterPro" id="IPR015424">
    <property type="entry name" value="PyrdxlP-dep_Trfase"/>
</dbReference>
<dbReference type="InterPro" id="IPR015421">
    <property type="entry name" value="PyrdxlP-dep_Trfase_major"/>
</dbReference>
<dbReference type="InterPro" id="IPR015422">
    <property type="entry name" value="PyrdxlP-dep_Trfase_small"/>
</dbReference>
<dbReference type="NCBIfam" id="NF003764">
    <property type="entry name" value="PRK05355.1"/>
    <property type="match status" value="1"/>
</dbReference>
<dbReference type="NCBIfam" id="TIGR01364">
    <property type="entry name" value="serC_1"/>
    <property type="match status" value="1"/>
</dbReference>
<dbReference type="PANTHER" id="PTHR43247">
    <property type="entry name" value="PHOSPHOSERINE AMINOTRANSFERASE"/>
    <property type="match status" value="1"/>
</dbReference>
<dbReference type="PANTHER" id="PTHR43247:SF1">
    <property type="entry name" value="PHOSPHOSERINE AMINOTRANSFERASE"/>
    <property type="match status" value="1"/>
</dbReference>
<dbReference type="Pfam" id="PF00266">
    <property type="entry name" value="Aminotran_5"/>
    <property type="match status" value="1"/>
</dbReference>
<dbReference type="PIRSF" id="PIRSF000525">
    <property type="entry name" value="SerC"/>
    <property type="match status" value="1"/>
</dbReference>
<dbReference type="SUPFAM" id="SSF53383">
    <property type="entry name" value="PLP-dependent transferases"/>
    <property type="match status" value="1"/>
</dbReference>
<sequence>MSKRAFNFCAGPAALPDAVLQRAQAELLDWRGKGLSVMEMSHRSDDYVAIASKAEQDLRDLLDIPSDYKVLFLQGGASQQFAEIPLNLLPEDGVADYIDTGIWSKKAIEEARRYGTVNVAASAKEYDYFAIPGQNEWTLTKDAAYVHYASNETIGGLEFDWIPETGDVPLVTDMSSDILSRPLDVSRFGLIYAGAQKNIGPSGLVVVIVREDLLGRARSVCPTMLNYKIAADNGSMYNTPATYSWYLSGLVFEWLKEQGGVTAMEQRNRAKKDLLYKTIDASDFYTNPIQPSARSWMNVPFRLADERLDKPFLEGAEARGLLNLKGHRSVGGMRASIYNALGLDAVEALVAYMAEFEKEHG</sequence>
<name>SERC_PSEA8</name>
<comment type="function">
    <text evidence="1">Catalyzes the reversible conversion of 3-phosphohydroxypyruvate to phosphoserine and of 3-hydroxy-2-oxo-4-phosphonooxybutanoate to phosphohydroxythreonine.</text>
</comment>
<comment type="catalytic activity">
    <reaction evidence="1">
        <text>O-phospho-L-serine + 2-oxoglutarate = 3-phosphooxypyruvate + L-glutamate</text>
        <dbReference type="Rhea" id="RHEA:14329"/>
        <dbReference type="ChEBI" id="CHEBI:16810"/>
        <dbReference type="ChEBI" id="CHEBI:18110"/>
        <dbReference type="ChEBI" id="CHEBI:29985"/>
        <dbReference type="ChEBI" id="CHEBI:57524"/>
        <dbReference type="EC" id="2.6.1.52"/>
    </reaction>
</comment>
<comment type="catalytic activity">
    <reaction evidence="1">
        <text>4-(phosphooxy)-L-threonine + 2-oxoglutarate = (R)-3-hydroxy-2-oxo-4-phosphooxybutanoate + L-glutamate</text>
        <dbReference type="Rhea" id="RHEA:16573"/>
        <dbReference type="ChEBI" id="CHEBI:16810"/>
        <dbReference type="ChEBI" id="CHEBI:29985"/>
        <dbReference type="ChEBI" id="CHEBI:58452"/>
        <dbReference type="ChEBI" id="CHEBI:58538"/>
        <dbReference type="EC" id="2.6.1.52"/>
    </reaction>
</comment>
<comment type="cofactor">
    <cofactor evidence="1">
        <name>pyridoxal 5'-phosphate</name>
        <dbReference type="ChEBI" id="CHEBI:597326"/>
    </cofactor>
    <text evidence="1">Binds 1 pyridoxal phosphate per subunit.</text>
</comment>
<comment type="pathway">
    <text evidence="1">Amino-acid biosynthesis; L-serine biosynthesis; L-serine from 3-phospho-D-glycerate: step 2/3.</text>
</comment>
<comment type="pathway">
    <text evidence="1">Cofactor biosynthesis; pyridoxine 5'-phosphate biosynthesis; pyridoxine 5'-phosphate from D-erythrose 4-phosphate: step 3/5.</text>
</comment>
<comment type="subunit">
    <text evidence="1">Homodimer.</text>
</comment>
<comment type="subcellular location">
    <subcellularLocation>
        <location evidence="1">Cytoplasm</location>
    </subcellularLocation>
</comment>
<comment type="similarity">
    <text evidence="1">Belongs to the class-V pyridoxal-phosphate-dependent aminotransferase family. SerC subfamily.</text>
</comment>
<organism>
    <name type="scientific">Pseudomonas aeruginosa (strain LESB58)</name>
    <dbReference type="NCBI Taxonomy" id="557722"/>
    <lineage>
        <taxon>Bacteria</taxon>
        <taxon>Pseudomonadati</taxon>
        <taxon>Pseudomonadota</taxon>
        <taxon>Gammaproteobacteria</taxon>
        <taxon>Pseudomonadales</taxon>
        <taxon>Pseudomonadaceae</taxon>
        <taxon>Pseudomonas</taxon>
    </lineage>
</organism>
<evidence type="ECO:0000255" key="1">
    <source>
        <dbReference type="HAMAP-Rule" id="MF_00160"/>
    </source>
</evidence>